<keyword id="KW-0413">Isomerase</keyword>
<keyword id="KW-0423">Lactose metabolism</keyword>
<keyword id="KW-1185">Reference proteome</keyword>
<name>LACB_STRMU</name>
<proteinExistence type="inferred from homology"/>
<sequence>MKIAIGCDHIVTDVKMELSKHLKEEGYEVLDVGTYDFTRTHYPIFGKKVGEAVSSGEADLGVCMCGTGVGISNAANKVPGVRTALVRDMTSALYSKEELNANVVSFGGAIIGKLLLFDIVDAFIKAQYKPTEENKKLIAKIKHLEAHNDKQADPHFFDEFLEKWNRGDYHD</sequence>
<dbReference type="EC" id="5.3.1.26" evidence="1"/>
<dbReference type="EMBL" id="M80797">
    <property type="protein sequence ID" value="AAA26905.1"/>
    <property type="molecule type" value="Genomic_DNA"/>
</dbReference>
<dbReference type="EMBL" id="AE014133">
    <property type="protein sequence ID" value="AAN59149.1"/>
    <property type="molecule type" value="Genomic_DNA"/>
</dbReference>
<dbReference type="PIR" id="D43258">
    <property type="entry name" value="D43258"/>
</dbReference>
<dbReference type="PIR" id="S27702">
    <property type="entry name" value="S27702"/>
</dbReference>
<dbReference type="RefSeq" id="NP_721843.1">
    <property type="nucleotide sequence ID" value="NC_004350.2"/>
</dbReference>
<dbReference type="RefSeq" id="WP_002262464.1">
    <property type="nucleotide sequence ID" value="NC_004350.2"/>
</dbReference>
<dbReference type="SMR" id="P26424"/>
<dbReference type="STRING" id="210007.SMU_1495"/>
<dbReference type="GeneID" id="93859068"/>
<dbReference type="KEGG" id="smu:SMU_1495"/>
<dbReference type="PATRIC" id="fig|210007.7.peg.1331"/>
<dbReference type="eggNOG" id="COG0698">
    <property type="taxonomic scope" value="Bacteria"/>
</dbReference>
<dbReference type="HOGENOM" id="CLU_091396_2_0_9"/>
<dbReference type="OrthoDB" id="1778624at2"/>
<dbReference type="PhylomeDB" id="P26424"/>
<dbReference type="UniPathway" id="UPA00702">
    <property type="reaction ID" value="UER00714"/>
</dbReference>
<dbReference type="Proteomes" id="UP000002512">
    <property type="component" value="Chromosome"/>
</dbReference>
<dbReference type="GO" id="GO:0050044">
    <property type="term" value="F:galactose-6-phosphate isomerase activity"/>
    <property type="evidence" value="ECO:0007669"/>
    <property type="project" value="UniProtKB-UniRule"/>
</dbReference>
<dbReference type="GO" id="GO:0004751">
    <property type="term" value="F:ribose-5-phosphate isomerase activity"/>
    <property type="evidence" value="ECO:0007669"/>
    <property type="project" value="TreeGrafter"/>
</dbReference>
<dbReference type="GO" id="GO:0019316">
    <property type="term" value="P:D-allose catabolic process"/>
    <property type="evidence" value="ECO:0007669"/>
    <property type="project" value="TreeGrafter"/>
</dbReference>
<dbReference type="GO" id="GO:0019388">
    <property type="term" value="P:galactose catabolic process"/>
    <property type="evidence" value="ECO:0007669"/>
    <property type="project" value="UniProtKB-UniPathway"/>
</dbReference>
<dbReference type="GO" id="GO:0019512">
    <property type="term" value="P:lactose catabolic process via tagatose-6-phosphate"/>
    <property type="evidence" value="ECO:0007669"/>
    <property type="project" value="UniProtKB-UniRule"/>
</dbReference>
<dbReference type="GO" id="GO:0009052">
    <property type="term" value="P:pentose-phosphate shunt, non-oxidative branch"/>
    <property type="evidence" value="ECO:0007669"/>
    <property type="project" value="TreeGrafter"/>
</dbReference>
<dbReference type="Gene3D" id="3.40.1400.10">
    <property type="entry name" value="Sugar-phosphate isomerase, RpiB/LacA/LacB"/>
    <property type="match status" value="1"/>
</dbReference>
<dbReference type="HAMAP" id="MF_01556">
    <property type="entry name" value="LacB"/>
    <property type="match status" value="1"/>
</dbReference>
<dbReference type="InterPro" id="IPR004784">
    <property type="entry name" value="LacB"/>
</dbReference>
<dbReference type="InterPro" id="IPR003500">
    <property type="entry name" value="RpiB_LacA_LacB"/>
</dbReference>
<dbReference type="InterPro" id="IPR036569">
    <property type="entry name" value="RpiB_LacA_LacB_sf"/>
</dbReference>
<dbReference type="NCBIfam" id="TIGR01119">
    <property type="entry name" value="lacB"/>
    <property type="match status" value="1"/>
</dbReference>
<dbReference type="NCBIfam" id="NF004051">
    <property type="entry name" value="PRK05571.1"/>
    <property type="match status" value="1"/>
</dbReference>
<dbReference type="NCBIfam" id="NF006381">
    <property type="entry name" value="PRK08622.1"/>
    <property type="match status" value="1"/>
</dbReference>
<dbReference type="NCBIfam" id="TIGR00689">
    <property type="entry name" value="rpiB_lacA_lacB"/>
    <property type="match status" value="1"/>
</dbReference>
<dbReference type="PANTHER" id="PTHR30345:SF0">
    <property type="entry name" value="DNA DAMAGE-REPAIR_TOLERATION PROTEIN DRT102"/>
    <property type="match status" value="1"/>
</dbReference>
<dbReference type="PANTHER" id="PTHR30345">
    <property type="entry name" value="RIBOSE-5-PHOSPHATE ISOMERASE B"/>
    <property type="match status" value="1"/>
</dbReference>
<dbReference type="Pfam" id="PF02502">
    <property type="entry name" value="LacAB_rpiB"/>
    <property type="match status" value="1"/>
</dbReference>
<dbReference type="PIRSF" id="PIRSF005384">
    <property type="entry name" value="RpiB_LacA_B"/>
    <property type="match status" value="1"/>
</dbReference>
<dbReference type="SUPFAM" id="SSF89623">
    <property type="entry name" value="Ribose/Galactose isomerase RpiB/AlsB"/>
    <property type="match status" value="1"/>
</dbReference>
<feature type="chain" id="PRO_0000208150" description="Galactose-6-phosphate isomerase subunit LacB">
    <location>
        <begin position="1"/>
        <end position="171"/>
    </location>
</feature>
<feature type="sequence conflict" description="In Ref. 1; AAA26905." evidence="2" ref="1">
    <original>V</original>
    <variation>W</variation>
    <location>
        <position position="11"/>
    </location>
</feature>
<feature type="sequence conflict" description="In Ref. 1; AAA26905." evidence="2" ref="1">
    <original>L</original>
    <variation>I</variation>
    <location>
        <position position="22"/>
    </location>
</feature>
<organism>
    <name type="scientific">Streptococcus mutans serotype c (strain ATCC 700610 / UA159)</name>
    <dbReference type="NCBI Taxonomy" id="210007"/>
    <lineage>
        <taxon>Bacteria</taxon>
        <taxon>Bacillati</taxon>
        <taxon>Bacillota</taxon>
        <taxon>Bacilli</taxon>
        <taxon>Lactobacillales</taxon>
        <taxon>Streptococcaceae</taxon>
        <taxon>Streptococcus</taxon>
    </lineage>
</organism>
<protein>
    <recommendedName>
        <fullName evidence="1">Galactose-6-phosphate isomerase subunit LacB</fullName>
        <ecNumber evidence="1">5.3.1.26</ecNumber>
    </recommendedName>
</protein>
<comment type="catalytic activity">
    <reaction evidence="1">
        <text>aldehydo-D-galactose 6-phosphate = keto-D-tagatose 6-phosphate</text>
        <dbReference type="Rhea" id="RHEA:13033"/>
        <dbReference type="ChEBI" id="CHEBI:58255"/>
        <dbReference type="ChEBI" id="CHEBI:134283"/>
        <dbReference type="EC" id="5.3.1.26"/>
    </reaction>
</comment>
<comment type="pathway">
    <text evidence="1">Carbohydrate metabolism; D-galactose 6-phosphate degradation; D-tagatose 6-phosphate from D-galactose 6-phosphate: step 1/1.</text>
</comment>
<comment type="subunit">
    <text evidence="1">Heteromultimeric protein consisting of LacA and LacB.</text>
</comment>
<comment type="similarity">
    <text evidence="1">Belongs to the LacAB/RpiB family.</text>
</comment>
<reference key="1">
    <citation type="journal article" date="1992" name="J. Bacteriol.">
        <title>Nucleotide and deduced amino acid sequences of the lacR, lacABCD, and lacFE genes encoding the repressor, tagatose 6-phosphate gene cluster, and sugar-specific phosphotransferase system components of the lactose operon of Streptococcus mutans.</title>
        <authorList>
            <person name="Rosey E.L."/>
            <person name="Stewart G.C."/>
        </authorList>
    </citation>
    <scope>NUCLEOTIDE SEQUENCE [GENOMIC DNA]</scope>
</reference>
<reference key="2">
    <citation type="journal article" date="2002" name="Proc. Natl. Acad. Sci. U.S.A.">
        <title>Genome sequence of Streptococcus mutans UA159, a cariogenic dental pathogen.</title>
        <authorList>
            <person name="Ajdic D.J."/>
            <person name="McShan W.M."/>
            <person name="McLaughlin R.E."/>
            <person name="Savic G."/>
            <person name="Chang J."/>
            <person name="Carson M.B."/>
            <person name="Primeaux C."/>
            <person name="Tian R."/>
            <person name="Kenton S."/>
            <person name="Jia H.G."/>
            <person name="Lin S.P."/>
            <person name="Qian Y."/>
            <person name="Li S."/>
            <person name="Zhu H."/>
            <person name="Najar F.Z."/>
            <person name="Lai H."/>
            <person name="White J."/>
            <person name="Roe B.A."/>
            <person name="Ferretti J.J."/>
        </authorList>
    </citation>
    <scope>NUCLEOTIDE SEQUENCE [LARGE SCALE GENOMIC DNA]</scope>
    <source>
        <strain>ATCC 700610 / UA159</strain>
    </source>
</reference>
<gene>
    <name evidence="1" type="primary">lacB</name>
    <name type="ordered locus">SMU_1495</name>
</gene>
<accession>P26424</accession>
<evidence type="ECO:0000255" key="1">
    <source>
        <dbReference type="HAMAP-Rule" id="MF_01556"/>
    </source>
</evidence>
<evidence type="ECO:0000305" key="2"/>